<proteinExistence type="predicted"/>
<evidence type="ECO:0000256" key="1">
    <source>
        <dbReference type="SAM" id="MobiDB-lite"/>
    </source>
</evidence>
<evidence type="ECO:0000305" key="2"/>
<sequence length="102" mass="10205">MKKPASKIRDEIAKLQEQLRQAETREAERIGRIALKAGLGGIEVEEAELQAAFESLAKRFRGGQGGANGASSGGKKPDGNATAGASAAAVGSGAAQGGNGEA</sequence>
<geneLocation type="plasmid">
    <name>sym pNGR234a</name>
</geneLocation>
<protein>
    <recommendedName>
        <fullName>Probable conjugal transfer protein TraC</fullName>
    </recommendedName>
</protein>
<organism>
    <name type="scientific">Sinorhizobium fredii (strain NBRC 101917 / NGR234)</name>
    <dbReference type="NCBI Taxonomy" id="394"/>
    <lineage>
        <taxon>Bacteria</taxon>
        <taxon>Pseudomonadati</taxon>
        <taxon>Pseudomonadota</taxon>
        <taxon>Alphaproteobacteria</taxon>
        <taxon>Hyphomicrobiales</taxon>
        <taxon>Rhizobiaceae</taxon>
        <taxon>Sinorhizobium/Ensifer group</taxon>
        <taxon>Sinorhizobium</taxon>
    </lineage>
</organism>
<gene>
    <name type="primary">traC</name>
    <name type="ordered locus">NGR_a03970</name>
    <name type="ORF">y4dT</name>
</gene>
<dbReference type="EMBL" id="U00090">
    <property type="protein sequence ID" value="AAB92440.1"/>
    <property type="molecule type" value="Genomic_DNA"/>
</dbReference>
<dbReference type="RefSeq" id="NP_443829.1">
    <property type="nucleotide sequence ID" value="NC_000914.2"/>
</dbReference>
<dbReference type="RefSeq" id="WP_010875409.1">
    <property type="nucleotide sequence ID" value="NC_000914.2"/>
</dbReference>
<dbReference type="SMR" id="P55419"/>
<dbReference type="KEGG" id="rhi:NGR_a03970"/>
<dbReference type="PATRIC" id="fig|394.7.peg.418"/>
<dbReference type="eggNOG" id="ENOG5034B86">
    <property type="taxonomic scope" value="Bacteria"/>
</dbReference>
<dbReference type="HOGENOM" id="CLU_182992_0_0_5"/>
<dbReference type="OrthoDB" id="7997694at2"/>
<dbReference type="Proteomes" id="UP000001054">
    <property type="component" value="Plasmid pNGR234a"/>
</dbReference>
<dbReference type="InterPro" id="IPR053443">
    <property type="entry name" value="Conjugal_Transfer_TraC"/>
</dbReference>
<dbReference type="InterPro" id="IPR012930">
    <property type="entry name" value="TraC"/>
</dbReference>
<dbReference type="NCBIfam" id="NF043004">
    <property type="entry name" value="CjTranTraC_Agrob"/>
    <property type="match status" value="1"/>
</dbReference>
<dbReference type="NCBIfam" id="NF010422">
    <property type="entry name" value="PRK13848.1"/>
    <property type="match status" value="1"/>
</dbReference>
<dbReference type="Pfam" id="PF07820">
    <property type="entry name" value="TraC"/>
    <property type="match status" value="1"/>
</dbReference>
<keyword id="KW-0184">Conjugation</keyword>
<keyword id="KW-0614">Plasmid</keyword>
<keyword id="KW-1185">Reference proteome</keyword>
<name>TRAC_SINFN</name>
<comment type="similarity">
    <text evidence="2">To A.tumefaciens Ti plasmid TraC.</text>
</comment>
<feature type="chain" id="PRO_0000065601" description="Probable conjugal transfer protein TraC">
    <location>
        <begin position="1"/>
        <end position="102"/>
    </location>
</feature>
<feature type="region of interest" description="Disordered" evidence="1">
    <location>
        <begin position="61"/>
        <end position="102"/>
    </location>
</feature>
<feature type="compositionally biased region" description="Gly residues" evidence="1">
    <location>
        <begin position="62"/>
        <end position="72"/>
    </location>
</feature>
<feature type="compositionally biased region" description="Low complexity" evidence="1">
    <location>
        <begin position="73"/>
        <end position="93"/>
    </location>
</feature>
<accession>P55419</accession>
<reference key="1">
    <citation type="journal article" date="1997" name="Nature">
        <title>Molecular basis of symbiosis between Rhizobium and legumes.</title>
        <authorList>
            <person name="Freiberg C.A."/>
            <person name="Fellay R."/>
            <person name="Bairoch A."/>
            <person name="Broughton W.J."/>
            <person name="Rosenthal A."/>
            <person name="Perret X."/>
        </authorList>
    </citation>
    <scope>NUCLEOTIDE SEQUENCE [LARGE SCALE GENOMIC DNA]</scope>
    <source>
        <strain>NBRC 101917 / NGR234</strain>
    </source>
</reference>
<reference key="2">
    <citation type="journal article" date="2009" name="Appl. Environ. Microbiol.">
        <title>Rhizobium sp. strain NGR234 possesses a remarkable number of secretion systems.</title>
        <authorList>
            <person name="Schmeisser C."/>
            <person name="Liesegang H."/>
            <person name="Krysciak D."/>
            <person name="Bakkou N."/>
            <person name="Le Quere A."/>
            <person name="Wollherr A."/>
            <person name="Heinemeyer I."/>
            <person name="Morgenstern B."/>
            <person name="Pommerening-Roeser A."/>
            <person name="Flores M."/>
            <person name="Palacios R."/>
            <person name="Brenner S."/>
            <person name="Gottschalk G."/>
            <person name="Schmitz R.A."/>
            <person name="Broughton W.J."/>
            <person name="Perret X."/>
            <person name="Strittmatter A.W."/>
            <person name="Streit W.R."/>
        </authorList>
    </citation>
    <scope>NUCLEOTIDE SEQUENCE [LARGE SCALE GENOMIC DNA]</scope>
    <source>
        <strain>NBRC 101917 / NGR234</strain>
    </source>
</reference>